<dbReference type="EC" id="3.2.2.23" evidence="2"/>
<dbReference type="EC" id="4.2.99.18" evidence="2"/>
<dbReference type="EMBL" id="CP000090">
    <property type="protein sequence ID" value="AAZ59728.1"/>
    <property type="molecule type" value="Genomic_DNA"/>
</dbReference>
<dbReference type="SMR" id="Q476F5"/>
<dbReference type="STRING" id="264198.Reut_A0346"/>
<dbReference type="KEGG" id="reu:Reut_A0346"/>
<dbReference type="eggNOG" id="COG0266">
    <property type="taxonomic scope" value="Bacteria"/>
</dbReference>
<dbReference type="HOGENOM" id="CLU_038423_1_1_4"/>
<dbReference type="OrthoDB" id="9800855at2"/>
<dbReference type="GO" id="GO:0034039">
    <property type="term" value="F:8-oxo-7,8-dihydroguanine DNA N-glycosylase activity"/>
    <property type="evidence" value="ECO:0007669"/>
    <property type="project" value="TreeGrafter"/>
</dbReference>
<dbReference type="GO" id="GO:0140078">
    <property type="term" value="F:class I DNA-(apurinic or apyrimidinic site) endonuclease activity"/>
    <property type="evidence" value="ECO:0007669"/>
    <property type="project" value="UniProtKB-EC"/>
</dbReference>
<dbReference type="GO" id="GO:0003684">
    <property type="term" value="F:damaged DNA binding"/>
    <property type="evidence" value="ECO:0007669"/>
    <property type="project" value="InterPro"/>
</dbReference>
<dbReference type="GO" id="GO:0008270">
    <property type="term" value="F:zinc ion binding"/>
    <property type="evidence" value="ECO:0007669"/>
    <property type="project" value="UniProtKB-UniRule"/>
</dbReference>
<dbReference type="GO" id="GO:0006284">
    <property type="term" value="P:base-excision repair"/>
    <property type="evidence" value="ECO:0007669"/>
    <property type="project" value="InterPro"/>
</dbReference>
<dbReference type="CDD" id="cd08966">
    <property type="entry name" value="EcFpg-like_N"/>
    <property type="match status" value="1"/>
</dbReference>
<dbReference type="FunFam" id="1.10.8.50:FF:000003">
    <property type="entry name" value="Formamidopyrimidine-DNA glycosylase"/>
    <property type="match status" value="1"/>
</dbReference>
<dbReference type="Gene3D" id="1.10.8.50">
    <property type="match status" value="1"/>
</dbReference>
<dbReference type="Gene3D" id="3.20.190.10">
    <property type="entry name" value="MutM-like, N-terminal"/>
    <property type="match status" value="1"/>
</dbReference>
<dbReference type="HAMAP" id="MF_00103">
    <property type="entry name" value="Fapy_DNA_glycosyl"/>
    <property type="match status" value="1"/>
</dbReference>
<dbReference type="InterPro" id="IPR015886">
    <property type="entry name" value="DNA_glyclase/AP_lyase_DNA-bd"/>
</dbReference>
<dbReference type="InterPro" id="IPR015887">
    <property type="entry name" value="DNA_glyclase_Znf_dom_DNA_BS"/>
</dbReference>
<dbReference type="InterPro" id="IPR020629">
    <property type="entry name" value="Formamido-pyr_DNA_Glyclase"/>
</dbReference>
<dbReference type="InterPro" id="IPR012319">
    <property type="entry name" value="FPG_cat"/>
</dbReference>
<dbReference type="InterPro" id="IPR035937">
    <property type="entry name" value="MutM-like_N-ter"/>
</dbReference>
<dbReference type="InterPro" id="IPR010979">
    <property type="entry name" value="Ribosomal_uS13-like_H2TH"/>
</dbReference>
<dbReference type="InterPro" id="IPR000214">
    <property type="entry name" value="Znf_DNA_glyclase/AP_lyase"/>
</dbReference>
<dbReference type="InterPro" id="IPR010663">
    <property type="entry name" value="Znf_FPG/IleRS"/>
</dbReference>
<dbReference type="NCBIfam" id="TIGR00577">
    <property type="entry name" value="fpg"/>
    <property type="match status" value="1"/>
</dbReference>
<dbReference type="NCBIfam" id="NF002211">
    <property type="entry name" value="PRK01103.1"/>
    <property type="match status" value="1"/>
</dbReference>
<dbReference type="PANTHER" id="PTHR22993">
    <property type="entry name" value="FORMAMIDOPYRIMIDINE-DNA GLYCOSYLASE"/>
    <property type="match status" value="1"/>
</dbReference>
<dbReference type="PANTHER" id="PTHR22993:SF9">
    <property type="entry name" value="FORMAMIDOPYRIMIDINE-DNA GLYCOSYLASE"/>
    <property type="match status" value="1"/>
</dbReference>
<dbReference type="Pfam" id="PF01149">
    <property type="entry name" value="Fapy_DNA_glyco"/>
    <property type="match status" value="1"/>
</dbReference>
<dbReference type="Pfam" id="PF06831">
    <property type="entry name" value="H2TH"/>
    <property type="match status" value="1"/>
</dbReference>
<dbReference type="Pfam" id="PF06827">
    <property type="entry name" value="zf-FPG_IleRS"/>
    <property type="match status" value="1"/>
</dbReference>
<dbReference type="SMART" id="SM00898">
    <property type="entry name" value="Fapy_DNA_glyco"/>
    <property type="match status" value="1"/>
</dbReference>
<dbReference type="SMART" id="SM01232">
    <property type="entry name" value="H2TH"/>
    <property type="match status" value="1"/>
</dbReference>
<dbReference type="SUPFAM" id="SSF57716">
    <property type="entry name" value="Glucocorticoid receptor-like (DNA-binding domain)"/>
    <property type="match status" value="1"/>
</dbReference>
<dbReference type="SUPFAM" id="SSF81624">
    <property type="entry name" value="N-terminal domain of MutM-like DNA repair proteins"/>
    <property type="match status" value="1"/>
</dbReference>
<dbReference type="SUPFAM" id="SSF46946">
    <property type="entry name" value="S13-like H2TH domain"/>
    <property type="match status" value="1"/>
</dbReference>
<dbReference type="PROSITE" id="PS51068">
    <property type="entry name" value="FPG_CAT"/>
    <property type="match status" value="1"/>
</dbReference>
<dbReference type="PROSITE" id="PS01242">
    <property type="entry name" value="ZF_FPG_1"/>
    <property type="match status" value="1"/>
</dbReference>
<dbReference type="PROSITE" id="PS51066">
    <property type="entry name" value="ZF_FPG_2"/>
    <property type="match status" value="1"/>
</dbReference>
<comment type="function">
    <text evidence="2">Involved in base excision repair of DNA damaged by oxidation or by mutagenic agents. Acts as a DNA glycosylase that recognizes and removes damaged bases. Has a preference for oxidized purines, such as 7,8-dihydro-8-oxoguanine (8-oxoG). Has AP (apurinic/apyrimidinic) lyase activity and introduces nicks in the DNA strand. Cleaves the DNA backbone by beta-delta elimination to generate a single-strand break at the site of the removed base with both 3'- and 5'-phosphates.</text>
</comment>
<comment type="catalytic activity">
    <reaction evidence="2">
        <text>Hydrolysis of DNA containing ring-opened 7-methylguanine residues, releasing 2,6-diamino-4-hydroxy-5-(N-methyl)formamidopyrimidine.</text>
        <dbReference type="EC" id="3.2.2.23"/>
    </reaction>
</comment>
<comment type="catalytic activity">
    <reaction evidence="2">
        <text>2'-deoxyribonucleotide-(2'-deoxyribose 5'-phosphate)-2'-deoxyribonucleotide-DNA = a 3'-end 2'-deoxyribonucleotide-(2,3-dehydro-2,3-deoxyribose 5'-phosphate)-DNA + a 5'-end 5'-phospho-2'-deoxyribonucleoside-DNA + H(+)</text>
        <dbReference type="Rhea" id="RHEA:66592"/>
        <dbReference type="Rhea" id="RHEA-COMP:13180"/>
        <dbReference type="Rhea" id="RHEA-COMP:16897"/>
        <dbReference type="Rhea" id="RHEA-COMP:17067"/>
        <dbReference type="ChEBI" id="CHEBI:15378"/>
        <dbReference type="ChEBI" id="CHEBI:136412"/>
        <dbReference type="ChEBI" id="CHEBI:157695"/>
        <dbReference type="ChEBI" id="CHEBI:167181"/>
        <dbReference type="EC" id="4.2.99.18"/>
    </reaction>
</comment>
<comment type="cofactor">
    <cofactor evidence="2">
        <name>Zn(2+)</name>
        <dbReference type="ChEBI" id="CHEBI:29105"/>
    </cofactor>
    <text evidence="2">Binds 1 zinc ion per subunit.</text>
</comment>
<comment type="subunit">
    <text evidence="2">Monomer.</text>
</comment>
<comment type="similarity">
    <text evidence="2">Belongs to the FPG family.</text>
</comment>
<gene>
    <name evidence="2" type="primary">mutM</name>
    <name evidence="2" type="synonym">fpg</name>
    <name type="ordered locus">Reut_A0346</name>
</gene>
<sequence length="284" mass="31376">MPELPEVEVTRRGLLPHVVGRRIADVTVRHRGLRWPVEDDLEARLAGRLVRRIERRGKYLLLECVDEATDDAGWLLVHLGMTGTLRVLPDAPPAGAHDHLDLVLDDAGGSRIVLRFRDPRRFGAVLWSPLSEAMLPGHPLLRGLGIEPFDSHFDGSWLHRHTRGRSAAIKTVLLAGNIVVGVGNIYASESLFRAGIRPTTPAGRLSLARCERLAQSVRETLAQAIERGGSTLRDFVGSDGASGYFQLECFVYDRAGEPCKVCGTPVRQIVQGQRSTFYCTHCQH</sequence>
<accession>Q476F5</accession>
<organism>
    <name type="scientific">Cupriavidus pinatubonensis (strain JMP 134 / LMG 1197)</name>
    <name type="common">Cupriavidus necator (strain JMP 134)</name>
    <dbReference type="NCBI Taxonomy" id="264198"/>
    <lineage>
        <taxon>Bacteria</taxon>
        <taxon>Pseudomonadati</taxon>
        <taxon>Pseudomonadota</taxon>
        <taxon>Betaproteobacteria</taxon>
        <taxon>Burkholderiales</taxon>
        <taxon>Burkholderiaceae</taxon>
        <taxon>Cupriavidus</taxon>
    </lineage>
</organism>
<name>FPG_CUPPJ</name>
<evidence type="ECO:0000250" key="1"/>
<evidence type="ECO:0000255" key="2">
    <source>
        <dbReference type="HAMAP-Rule" id="MF_00103"/>
    </source>
</evidence>
<reference key="1">
    <citation type="journal article" date="2010" name="PLoS ONE">
        <title>The complete multipartite genome sequence of Cupriavidus necator JMP134, a versatile pollutant degrader.</title>
        <authorList>
            <person name="Lykidis A."/>
            <person name="Perez-Pantoja D."/>
            <person name="Ledger T."/>
            <person name="Mavromatis K."/>
            <person name="Anderson I.J."/>
            <person name="Ivanova N.N."/>
            <person name="Hooper S.D."/>
            <person name="Lapidus A."/>
            <person name="Lucas S."/>
            <person name="Gonzalez B."/>
            <person name="Kyrpides N.C."/>
        </authorList>
    </citation>
    <scope>NUCLEOTIDE SEQUENCE [LARGE SCALE GENOMIC DNA]</scope>
    <source>
        <strain>JMP134 / LMG 1197</strain>
    </source>
</reference>
<protein>
    <recommendedName>
        <fullName evidence="2">Formamidopyrimidine-DNA glycosylase</fullName>
        <shortName evidence="2">Fapy-DNA glycosylase</shortName>
        <ecNumber evidence="2">3.2.2.23</ecNumber>
    </recommendedName>
    <alternativeName>
        <fullName evidence="2">DNA-(apurinic or apyrimidinic site) lyase MutM</fullName>
        <shortName evidence="2">AP lyase MutM</shortName>
        <ecNumber evidence="2">4.2.99.18</ecNumber>
    </alternativeName>
</protein>
<proteinExistence type="inferred from homology"/>
<keyword id="KW-0227">DNA damage</keyword>
<keyword id="KW-0234">DNA repair</keyword>
<keyword id="KW-0238">DNA-binding</keyword>
<keyword id="KW-0326">Glycosidase</keyword>
<keyword id="KW-0378">Hydrolase</keyword>
<keyword id="KW-0456">Lyase</keyword>
<keyword id="KW-0479">Metal-binding</keyword>
<keyword id="KW-0511">Multifunctional enzyme</keyword>
<keyword id="KW-0862">Zinc</keyword>
<keyword id="KW-0863">Zinc-finger</keyword>
<feature type="initiator methionine" description="Removed" evidence="1">
    <location>
        <position position="1"/>
    </location>
</feature>
<feature type="chain" id="PRO_0000228463" description="Formamidopyrimidine-DNA glycosylase">
    <location>
        <begin position="2"/>
        <end position="284"/>
    </location>
</feature>
<feature type="zinc finger region" description="FPG-type" evidence="2">
    <location>
        <begin position="250"/>
        <end position="284"/>
    </location>
</feature>
<feature type="active site" description="Schiff-base intermediate with DNA" evidence="2">
    <location>
        <position position="2"/>
    </location>
</feature>
<feature type="active site" description="Proton donor" evidence="2">
    <location>
        <position position="3"/>
    </location>
</feature>
<feature type="active site" description="Proton donor; for beta-elimination activity" evidence="2">
    <location>
        <position position="58"/>
    </location>
</feature>
<feature type="active site" description="Proton donor; for delta-elimination activity" evidence="2">
    <location>
        <position position="274"/>
    </location>
</feature>
<feature type="binding site" evidence="2">
    <location>
        <position position="97"/>
    </location>
    <ligand>
        <name>DNA</name>
        <dbReference type="ChEBI" id="CHEBI:16991"/>
    </ligand>
</feature>
<feature type="binding site" evidence="2">
    <location>
        <position position="120"/>
    </location>
    <ligand>
        <name>DNA</name>
        <dbReference type="ChEBI" id="CHEBI:16991"/>
    </ligand>
</feature>
<feature type="binding site" evidence="2">
    <location>
        <position position="165"/>
    </location>
    <ligand>
        <name>DNA</name>
        <dbReference type="ChEBI" id="CHEBI:16991"/>
    </ligand>
</feature>